<protein>
    <recommendedName>
        <fullName>Metastasis-associated protein MTA1</fullName>
    </recommendedName>
</protein>
<comment type="function">
    <text evidence="2 3">Transcriptional coregulator which can act as both a transcriptional corepressor and coactivator (By similarity). Acts as a component of the histone deacetylase NuRD complex which participates in the remodeling of chromatin (By similarity). In the NuRD complex, regulates transcription of its targets by modifying the acetylation status of the target chromatin and cofactor accessibility to the target DNA (By similarity). In conjunction with other components of NuRD, acts as a transcriptional corepressor of BRCA1, ESR1, TFF1 and CDKN1A (By similarity). Acts as a transcriptional coactivator of BCAS3, and SUMO2, independent of the NuRD complex (By similarity). Stimulates the expression of WNT1 by inhibiting the expression of its transcriptional corepressor SIX3 (By similarity). Regulates p53-dependent and -independent DNA repair processes following genotoxic stress (By similarity). Regulates the stability and function of p53/TP53 by inhibiting its ubiquitination by COP1 and MDM2 thereby regulating the p53-dependent DNA repair (By similarity). Plays a role in the regulation of the circadian clock and is essential for the generation and maintenance of circadian rhythms under constant light and for normal entrainment of behavior to light-dark (LD) cycles (By similarity). Positively regulates the CLOCK-BMAL1 heterodimer mediated transcriptional activation of its own transcription and the transcription of CRY1 (By similarity). Regulates deacetylation of BMAL1 by regulating SIRT1 expression, resulting in derepressing CRY1-mediated transcription repression (By similarity). With TFCP2L1, promotes establishment and maintenance of pluripotency in embryonic stem cells (ESCs) and inhibits endoderm differentiation (By similarity).</text>
</comment>
<comment type="subunit">
    <text evidence="2 3">Component of the nucleosome remodeling and deacetylase (NuRD) repressor complex, composed of core proteins MTA1, MTA2, MTA3, RBBP4, RBBP7, HDAC1, HDAC2, MBD2, MBD3, and peripherally associated proteins CDK2AP1, CDK2AP2, GATAD2A, GATAD2B, CHD3, CHD4 and CHD5 (By similarity). The exact stoichiometry of the NuRD complex is unknown, and some subunits such as MBD2 and MBD3, GATAD2A and GATAD2B, and CHD3, CHD4 and CHD5 define mutually exclusive NuRD complexes (By similarity). Interacts with RBBP4; the interaction is direct (By similarity). Interacts with BMAL1. Interacts with CLOCK. Interacts with COP1. Interacts with CSNK1G2 in the cytoplasm. Interacts with EP300. Interacts with HDAC2 (By similarity). Interacts with ITGB3BP/CENPR (By similarity). Interacts with MBD3L2 (By similarity). Interacts with MDM2 (By similarity). Interacts with NACC2 (By similarity). Interacts with p53/TP53. Interacts with PIAS1. Interacts with PIAS3. Interacts with PIAS4. Interacts with PWWP2A. Interacts with PWWP2B. Interacts with SENP1. Interacts with SENP2. Interacts with SIX3; facilitates the binding of SIX3 to the core DNA motif of SIX3 promoter. Interacts with SUMO1. Interacts with SUMO2. Interacts with TFCP2L1; which is indispensable for TFCP2L1-mediated self-renewal-promoting effect and endoderm-inhibiting action (By similarity). Interacts with TFAP2C (By similarity). Interacts with TPR. Interacts with UBE2I/UBC9 (By similarity).</text>
</comment>
<comment type="interaction">
    <interactant intactId="EBI-349237">
        <id>Q62599</id>
    </interactant>
    <interactant intactId="EBI-15649593">
        <id>Q9ET75</id>
        <label>Six3</label>
    </interactant>
    <organismsDiffer>false</organismsDiffer>
    <experiments>2</experiments>
</comment>
<comment type="subcellular location">
    <molecule>Isoform 1</molecule>
    <subcellularLocation>
        <location evidence="9">Nucleus</location>
    </subcellularLocation>
    <subcellularLocation>
        <location evidence="6 7">Nucleus envelope</location>
    </subcellularLocation>
    <subcellularLocation>
        <location evidence="1">Cytoplasm</location>
    </subcellularLocation>
    <subcellularLocation>
        <location evidence="1">Cytoplasm</location>
        <location evidence="1">Cytoskeleton</location>
    </subcellularLocation>
    <text evidence="1">Associated with microtubules. Localization at the nuclear envelope is TPR-dependent (By similarity).</text>
</comment>
<comment type="subcellular location">
    <molecule>Isoform 2</molecule>
    <subcellularLocation>
        <location evidence="9">Rough endoplasmic reticulum</location>
    </subcellularLocation>
    <subcellularLocation>
        <location evidence="9">Golgi apparatus</location>
    </subcellularLocation>
    <subcellularLocation>
        <location evidence="9">Zymogen granule</location>
    </subcellularLocation>
</comment>
<comment type="alternative products">
    <event type="alternative splicing"/>
    <event type="alternative initiation"/>
    <isoform>
        <id>Q62599-1</id>
        <name>1</name>
        <name>MTA1</name>
        <name>MTA1p</name>
        <sequence type="displayed"/>
    </isoform>
    <isoform>
        <id>Q62599-2</id>
        <name>2</name>
        <name>ZG29</name>
        <name>ZG29p</name>
        <sequence type="described" ref="VSP_019712 VSP_019713"/>
    </isoform>
</comment>
<comment type="tissue specificity">
    <text evidence="9">Isoform 1 abundant in testis and expressed at low levels in brain, heart, lung, liver, and kidney. Isoform 2 abundant in adrenal gland, brain, colon, heart, liver, lung, muscle, prostate, stomach, testis, and thymus and expressed at low levels in duodenum, kidney, pancreas, parotid, and spleen.</text>
</comment>
<comment type="developmental stage">
    <molecule>Isoform 1</molecule>
    <text>Highly expressed in metastatic cells.</text>
</comment>
<comment type="induction">
    <molecule>Isoform 1</molecule>
    <text evidence="9">Induced by dexamethasone and, in pancreas, by treatment with the proteinase inhibitor FOY-305 which binds to activated trypsin and induces release of cholecystokinin.</text>
</comment>
<comment type="PTM">
    <text evidence="1">Phosphorylation by CSNK1G2/CK1 triggered by estrogen enhances corepression of estrogen receptor (ER).</text>
</comment>
<comment type="PTM">
    <text evidence="1">Acetylation is essential for its transcriptional coactivator activity.</text>
</comment>
<comment type="PTM">
    <text evidence="1">Sumoylation positively regulates its transcriptional corepressor activity but does not affect the protein stability. Sumoylated preferentially by SUMO2 or SUMO3 than SUMO1. Sumoylation is enhanced by PIAS1/3/4 and preferentially sumoylated by SUMO2 in the presence of PIAS1/3/4. Desumoylated by SENP1 (By similarity).</text>
</comment>
<comment type="PTM">
    <text evidence="1">Ubiquitinated by COP1, which leads to proteasomal degradation.</text>
</comment>
<comment type="miscellaneous">
    <molecule>Isoform 2</molecule>
    <text evidence="11">Produced by alternative splicing and alternative initiation at Met-465 of isoform 1.</text>
</comment>
<comment type="similarity">
    <text evidence="11">Belongs to the metastasis-associated protein family.</text>
</comment>
<reference key="1">
    <citation type="journal article" date="1994" name="J. Biol. Chem.">
        <title>A novel candidate metastasis-associated gene, mta1, differentially expressed in highly metastatic mammary adenocarcinoma cell lines. cDNA cloning, expression, and protein analyses.</title>
        <authorList>
            <person name="Toh Y."/>
            <person name="Pencil S.D."/>
            <person name="Nicolson G.L."/>
        </authorList>
    </citation>
    <scope>NUCLEOTIDE SEQUENCE [MRNA] (ISOFORM 1)</scope>
    <source>
        <strain>Fischer 344</strain>
        <tissue>Mammary gland</tissue>
    </source>
</reference>
<reference key="2">
    <citation type="journal article" date="1995" name="Gene">
        <title>Analysis of the complete sequence of the novel metastasis-associated candidate gene, mta1, differentially expressed in mammary adenocarcinoma and breast cancer cell lines.</title>
        <authorList>
            <person name="Toh Y."/>
            <person name="Pencil S.D."/>
            <person name="Nicolson G.L."/>
        </authorList>
    </citation>
    <scope>NUCLEOTIDE SEQUENCE [MRNA] (ISOFORM 1)</scope>
    <source>
        <strain>Fischer 344</strain>
        <tissue>Mammary gland</tissue>
    </source>
</reference>
<reference key="3">
    <citation type="journal article" date="1999" name="J. Cell Sci.">
        <title>A novel zymogen granule protein (ZG29p) and the nuclear protein MTA1p are differentially expressed by alternative transcription initiation in pancreatic acinar cells of the rat.</title>
        <authorList>
            <person name="Kleene R."/>
            <person name="Zdzieblo J."/>
            <person name="Wege K."/>
            <person name="Kern H.-F."/>
        </authorList>
    </citation>
    <scope>NUCLEOTIDE SEQUENCE [MRNA] (ISOFORM 2)</scope>
    <scope>SUBCELLULAR LOCATION (ISOFORMS 1 AND 2)</scope>
    <scope>TISSUE SPECIFICITY</scope>
    <scope>INDUCTION</scope>
    <source>
        <strain>Wistar</strain>
        <tissue>Pancreas</tissue>
    </source>
</reference>
<reference key="4">
    <citation type="journal article" date="2000" name="Biochemistry">
        <title>SH3 binding sites of ZG29p mediate an interaction with amylase and are involved in condensation-sorting in the exocrine rat pancreas.</title>
        <authorList>
            <person name="Kleene R."/>
            <person name="Classen B."/>
            <person name="Zdzieblo J."/>
            <person name="Schrader M."/>
        </authorList>
    </citation>
    <scope>INTERACTION WITH AMYLASE</scope>
</reference>
<reference key="5">
    <citation type="journal article" date="2012" name="Nat. Commun.">
        <title>Quantitative maps of protein phosphorylation sites across 14 different rat organs and tissues.</title>
        <authorList>
            <person name="Lundby A."/>
            <person name="Secher A."/>
            <person name="Lage K."/>
            <person name="Nordsborg N.B."/>
            <person name="Dmytriyev A."/>
            <person name="Lundby C."/>
            <person name="Olsen J.V."/>
        </authorList>
    </citation>
    <scope>PHOSPHORYLATION [LARGE SCALE ANALYSIS] AT SER-522 AND SER-576</scope>
    <scope>IDENTIFICATION BY MASS SPECTROMETRY [LARGE SCALE ANALYSIS]</scope>
</reference>
<keyword id="KW-0007">Acetylation</keyword>
<keyword id="KW-0010">Activator</keyword>
<keyword id="KW-0024">Alternative initiation</keyword>
<keyword id="KW-0025">Alternative splicing</keyword>
<keyword id="KW-0090">Biological rhythms</keyword>
<keyword id="KW-0963">Cytoplasm</keyword>
<keyword id="KW-0968">Cytoplasmic vesicle</keyword>
<keyword id="KW-0206">Cytoskeleton</keyword>
<keyword id="KW-0238">DNA-binding</keyword>
<keyword id="KW-0256">Endoplasmic reticulum</keyword>
<keyword id="KW-0333">Golgi apparatus</keyword>
<keyword id="KW-1017">Isopeptide bond</keyword>
<keyword id="KW-0479">Metal-binding</keyword>
<keyword id="KW-0539">Nucleus</keyword>
<keyword id="KW-0597">Phosphoprotein</keyword>
<keyword id="KW-1185">Reference proteome</keyword>
<keyword id="KW-0678">Repressor</keyword>
<keyword id="KW-0804">Transcription</keyword>
<keyword id="KW-0805">Transcription regulation</keyword>
<keyword id="KW-0832">Ubl conjugation</keyword>
<keyword id="KW-0862">Zinc</keyword>
<keyword id="KW-0863">Zinc-finger</keyword>
<name>MTA1_RAT</name>
<dbReference type="EMBL" id="U02522">
    <property type="protein sequence ID" value="AAA82722.1"/>
    <property type="molecule type" value="mRNA"/>
</dbReference>
<dbReference type="EMBL" id="AJ132046">
    <property type="protein sequence ID" value="CAB38718.1"/>
    <property type="molecule type" value="mRNA"/>
</dbReference>
<dbReference type="PIR" id="A54766">
    <property type="entry name" value="A54766"/>
</dbReference>
<dbReference type="RefSeq" id="NP_072110.1">
    <molecule id="Q62599-1"/>
    <property type="nucleotide sequence ID" value="NM_022588.4"/>
</dbReference>
<dbReference type="SMR" id="Q62599"/>
<dbReference type="BioGRID" id="249104">
    <property type="interactions" value="1"/>
</dbReference>
<dbReference type="DIP" id="DIP-33254N"/>
<dbReference type="FunCoup" id="Q62599">
    <property type="interactions" value="3169"/>
</dbReference>
<dbReference type="IntAct" id="Q62599">
    <property type="interactions" value="3"/>
</dbReference>
<dbReference type="MINT" id="Q62599"/>
<dbReference type="STRING" id="10116.ENSRNOP00000006521"/>
<dbReference type="iPTMnet" id="Q62599"/>
<dbReference type="PhosphoSitePlus" id="Q62599"/>
<dbReference type="PaxDb" id="10116-ENSRNOP00000051141"/>
<dbReference type="GeneID" id="64520"/>
<dbReference type="KEGG" id="rno:64520"/>
<dbReference type="UCSC" id="RGD:621018">
    <molecule id="Q62599-1"/>
    <property type="organism name" value="rat"/>
</dbReference>
<dbReference type="AGR" id="RGD:621018"/>
<dbReference type="CTD" id="9112"/>
<dbReference type="RGD" id="621018">
    <property type="gene designation" value="Mta1"/>
</dbReference>
<dbReference type="eggNOG" id="KOG3554">
    <property type="taxonomic scope" value="Eukaryota"/>
</dbReference>
<dbReference type="InParanoid" id="Q62599"/>
<dbReference type="PhylomeDB" id="Q62599"/>
<dbReference type="Reactome" id="R-RNO-3214815">
    <property type="pathway name" value="HDACs deacetylate histones"/>
</dbReference>
<dbReference type="Reactome" id="R-RNO-3232118">
    <property type="pathway name" value="SUMOylation of transcription factors"/>
</dbReference>
<dbReference type="Reactome" id="R-RNO-73762">
    <property type="pathway name" value="RNA Polymerase I Transcription Initiation"/>
</dbReference>
<dbReference type="Reactome" id="R-RNO-8943724">
    <property type="pathway name" value="Regulation of PTEN gene transcription"/>
</dbReference>
<dbReference type="PRO" id="PR:Q62599"/>
<dbReference type="Proteomes" id="UP000002494">
    <property type="component" value="Unplaced"/>
</dbReference>
<dbReference type="GO" id="GO:0005737">
    <property type="term" value="C:cytoplasm"/>
    <property type="evidence" value="ECO:0000250"/>
    <property type="project" value="UniProtKB"/>
</dbReference>
<dbReference type="GO" id="GO:0005783">
    <property type="term" value="C:endoplasmic reticulum"/>
    <property type="evidence" value="ECO:0000314"/>
    <property type="project" value="UniProtKB"/>
</dbReference>
<dbReference type="GO" id="GO:0005794">
    <property type="term" value="C:Golgi apparatus"/>
    <property type="evidence" value="ECO:0000314"/>
    <property type="project" value="UniProtKB"/>
</dbReference>
<dbReference type="GO" id="GO:0005874">
    <property type="term" value="C:microtubule"/>
    <property type="evidence" value="ECO:0000250"/>
    <property type="project" value="UniProtKB"/>
</dbReference>
<dbReference type="GO" id="GO:0005635">
    <property type="term" value="C:nuclear envelope"/>
    <property type="evidence" value="ECO:0000250"/>
    <property type="project" value="UniProtKB"/>
</dbReference>
<dbReference type="GO" id="GO:0005654">
    <property type="term" value="C:nucleoplasm"/>
    <property type="evidence" value="ECO:0000318"/>
    <property type="project" value="GO_Central"/>
</dbReference>
<dbReference type="GO" id="GO:0005634">
    <property type="term" value="C:nucleus"/>
    <property type="evidence" value="ECO:0000314"/>
    <property type="project" value="UniProtKB"/>
</dbReference>
<dbReference type="GO" id="GO:0016581">
    <property type="term" value="C:NuRD complex"/>
    <property type="evidence" value="ECO:0000250"/>
    <property type="project" value="UniProtKB"/>
</dbReference>
<dbReference type="GO" id="GO:0005791">
    <property type="term" value="C:rough endoplasmic reticulum"/>
    <property type="evidence" value="ECO:0007669"/>
    <property type="project" value="UniProtKB-SubCell"/>
</dbReference>
<dbReference type="GO" id="GO:0042588">
    <property type="term" value="C:zymogen granule"/>
    <property type="evidence" value="ECO:0007669"/>
    <property type="project" value="UniProtKB-SubCell"/>
</dbReference>
<dbReference type="GO" id="GO:0003682">
    <property type="term" value="F:chromatin binding"/>
    <property type="evidence" value="ECO:0007669"/>
    <property type="project" value="InterPro"/>
</dbReference>
<dbReference type="GO" id="GO:0019899">
    <property type="term" value="F:enzyme binding"/>
    <property type="evidence" value="ECO:0000353"/>
    <property type="project" value="UniProtKB"/>
</dbReference>
<dbReference type="GO" id="GO:0042826">
    <property type="term" value="F:histone deacetylase binding"/>
    <property type="evidence" value="ECO:0000318"/>
    <property type="project" value="GO_Central"/>
</dbReference>
<dbReference type="GO" id="GO:0000978">
    <property type="term" value="F:RNA polymerase II cis-regulatory region sequence-specific DNA binding"/>
    <property type="evidence" value="ECO:0000250"/>
    <property type="project" value="UniProtKB"/>
</dbReference>
<dbReference type="GO" id="GO:0061629">
    <property type="term" value="F:RNA polymerase II-specific DNA-binding transcription factor binding"/>
    <property type="evidence" value="ECO:0000266"/>
    <property type="project" value="RGD"/>
</dbReference>
<dbReference type="GO" id="GO:0003713">
    <property type="term" value="F:transcription coactivator activity"/>
    <property type="evidence" value="ECO:0000250"/>
    <property type="project" value="UniProtKB"/>
</dbReference>
<dbReference type="GO" id="GO:0003714">
    <property type="term" value="F:transcription corepressor activity"/>
    <property type="evidence" value="ECO:0000266"/>
    <property type="project" value="RGD"/>
</dbReference>
<dbReference type="GO" id="GO:0008270">
    <property type="term" value="F:zinc ion binding"/>
    <property type="evidence" value="ECO:0007669"/>
    <property type="project" value="UniProtKB-KW"/>
</dbReference>
<dbReference type="GO" id="GO:0006338">
    <property type="term" value="P:chromatin remodeling"/>
    <property type="evidence" value="ECO:0000266"/>
    <property type="project" value="RGD"/>
</dbReference>
<dbReference type="GO" id="GO:0032922">
    <property type="term" value="P:circadian regulation of gene expression"/>
    <property type="evidence" value="ECO:0000250"/>
    <property type="project" value="UniProtKB"/>
</dbReference>
<dbReference type="GO" id="GO:0006302">
    <property type="term" value="P:double-strand break repair"/>
    <property type="evidence" value="ECO:0000250"/>
    <property type="project" value="UniProtKB"/>
</dbReference>
<dbReference type="GO" id="GO:0043153">
    <property type="term" value="P:entrainment of circadian clock by photoperiod"/>
    <property type="evidence" value="ECO:0000250"/>
    <property type="project" value="UniProtKB"/>
</dbReference>
<dbReference type="GO" id="GO:0007565">
    <property type="term" value="P:female pregnancy"/>
    <property type="evidence" value="ECO:0000270"/>
    <property type="project" value="RGD"/>
</dbReference>
<dbReference type="GO" id="GO:0045475">
    <property type="term" value="P:locomotor rhythm"/>
    <property type="evidence" value="ECO:0000250"/>
    <property type="project" value="UniProtKB"/>
</dbReference>
<dbReference type="GO" id="GO:0045814">
    <property type="term" value="P:negative regulation of gene expression, epigenetic"/>
    <property type="evidence" value="ECO:0000250"/>
    <property type="project" value="UniProtKB"/>
</dbReference>
<dbReference type="GO" id="GO:0000122">
    <property type="term" value="P:negative regulation of transcription by RNA polymerase II"/>
    <property type="evidence" value="ECO:0000318"/>
    <property type="project" value="GO_Central"/>
</dbReference>
<dbReference type="GO" id="GO:1902499">
    <property type="term" value="P:positive regulation of protein autoubiquitination"/>
    <property type="evidence" value="ECO:0000250"/>
    <property type="project" value="UniProtKB"/>
</dbReference>
<dbReference type="GO" id="GO:0043161">
    <property type="term" value="P:proteasome-mediated ubiquitin-dependent protein catabolic process"/>
    <property type="evidence" value="ECO:0000250"/>
    <property type="project" value="UniProtKB"/>
</dbReference>
<dbReference type="GO" id="GO:0010212">
    <property type="term" value="P:response to ionizing radiation"/>
    <property type="evidence" value="ECO:0000250"/>
    <property type="project" value="UniProtKB"/>
</dbReference>
<dbReference type="GO" id="GO:0033363">
    <property type="term" value="P:secretory granule organization"/>
    <property type="evidence" value="ECO:0000314"/>
    <property type="project" value="UniProtKB"/>
</dbReference>
<dbReference type="CDD" id="cd04709">
    <property type="entry name" value="BAH_MTA"/>
    <property type="match status" value="1"/>
</dbReference>
<dbReference type="CDD" id="cd11661">
    <property type="entry name" value="SANT_MTA3_like"/>
    <property type="match status" value="1"/>
</dbReference>
<dbReference type="CDD" id="cd00202">
    <property type="entry name" value="ZnF_GATA"/>
    <property type="match status" value="1"/>
</dbReference>
<dbReference type="FunFam" id="1.10.10.60:FF:000012">
    <property type="entry name" value="Metastasis-associated 1 family, member 3"/>
    <property type="match status" value="1"/>
</dbReference>
<dbReference type="FunFam" id="2.30.30.490:FF:000001">
    <property type="entry name" value="Metastasis-associated 1 family, member 3"/>
    <property type="match status" value="1"/>
</dbReference>
<dbReference type="FunFam" id="4.10.1240.50:FF:000001">
    <property type="entry name" value="Metastasis-associated 1 family, member 3"/>
    <property type="match status" value="1"/>
</dbReference>
<dbReference type="Gene3D" id="2.30.30.490">
    <property type="match status" value="1"/>
</dbReference>
<dbReference type="Gene3D" id="4.10.1240.50">
    <property type="match status" value="1"/>
</dbReference>
<dbReference type="Gene3D" id="1.10.10.60">
    <property type="entry name" value="Homeodomain-like"/>
    <property type="match status" value="1"/>
</dbReference>
<dbReference type="InterPro" id="IPR001025">
    <property type="entry name" value="BAH_dom"/>
</dbReference>
<dbReference type="InterPro" id="IPR043151">
    <property type="entry name" value="BAH_sf"/>
</dbReference>
<dbReference type="InterPro" id="IPR000949">
    <property type="entry name" value="ELM2_dom"/>
</dbReference>
<dbReference type="InterPro" id="IPR009057">
    <property type="entry name" value="Homeodomain-like_sf"/>
</dbReference>
<dbReference type="InterPro" id="IPR040138">
    <property type="entry name" value="MIER/MTA"/>
</dbReference>
<dbReference type="InterPro" id="IPR035170">
    <property type="entry name" value="MTA1_R1"/>
</dbReference>
<dbReference type="InterPro" id="IPR001005">
    <property type="entry name" value="SANT/Myb"/>
</dbReference>
<dbReference type="InterPro" id="IPR017884">
    <property type="entry name" value="SANT_dom"/>
</dbReference>
<dbReference type="InterPro" id="IPR000679">
    <property type="entry name" value="Znf_GATA"/>
</dbReference>
<dbReference type="PANTHER" id="PTHR10865">
    <property type="entry name" value="METASTASIS-ASSOCIATED PROTEIN AND MESODERM INDUCTION EARLY RESPONSE PROTEIN"/>
    <property type="match status" value="1"/>
</dbReference>
<dbReference type="PANTHER" id="PTHR10865:SF5">
    <property type="entry name" value="METASTASIS-ASSOCIATED PROTEIN MTA1"/>
    <property type="match status" value="1"/>
</dbReference>
<dbReference type="Pfam" id="PF01426">
    <property type="entry name" value="BAH"/>
    <property type="match status" value="2"/>
</dbReference>
<dbReference type="Pfam" id="PF01448">
    <property type="entry name" value="ELM2"/>
    <property type="match status" value="1"/>
</dbReference>
<dbReference type="Pfam" id="PF00320">
    <property type="entry name" value="GATA"/>
    <property type="match status" value="1"/>
</dbReference>
<dbReference type="Pfam" id="PF17226">
    <property type="entry name" value="MTA_R1"/>
    <property type="match status" value="1"/>
</dbReference>
<dbReference type="Pfam" id="PF00249">
    <property type="entry name" value="Myb_DNA-binding"/>
    <property type="match status" value="1"/>
</dbReference>
<dbReference type="SMART" id="SM00439">
    <property type="entry name" value="BAH"/>
    <property type="match status" value="1"/>
</dbReference>
<dbReference type="SMART" id="SM01189">
    <property type="entry name" value="ELM2"/>
    <property type="match status" value="1"/>
</dbReference>
<dbReference type="SMART" id="SM00717">
    <property type="entry name" value="SANT"/>
    <property type="match status" value="1"/>
</dbReference>
<dbReference type="SMART" id="SM00401">
    <property type="entry name" value="ZnF_GATA"/>
    <property type="match status" value="1"/>
</dbReference>
<dbReference type="SUPFAM" id="SSF46689">
    <property type="entry name" value="Homeodomain-like"/>
    <property type="match status" value="1"/>
</dbReference>
<dbReference type="PROSITE" id="PS51038">
    <property type="entry name" value="BAH"/>
    <property type="match status" value="1"/>
</dbReference>
<dbReference type="PROSITE" id="PS51156">
    <property type="entry name" value="ELM2"/>
    <property type="match status" value="1"/>
</dbReference>
<dbReference type="PROSITE" id="PS51293">
    <property type="entry name" value="SANT"/>
    <property type="match status" value="1"/>
</dbReference>
<evidence type="ECO:0000250" key="1"/>
<evidence type="ECO:0000250" key="2">
    <source>
        <dbReference type="UniProtKB" id="Q13330"/>
    </source>
</evidence>
<evidence type="ECO:0000250" key="3">
    <source>
        <dbReference type="UniProtKB" id="Q8K4B0"/>
    </source>
</evidence>
<evidence type="ECO:0000255" key="4"/>
<evidence type="ECO:0000255" key="5">
    <source>
        <dbReference type="PROSITE-ProRule" id="PRU00370"/>
    </source>
</evidence>
<evidence type="ECO:0000255" key="6">
    <source>
        <dbReference type="PROSITE-ProRule" id="PRU00512"/>
    </source>
</evidence>
<evidence type="ECO:0000255" key="7">
    <source>
        <dbReference type="PROSITE-ProRule" id="PRU00624"/>
    </source>
</evidence>
<evidence type="ECO:0000256" key="8">
    <source>
        <dbReference type="SAM" id="MobiDB-lite"/>
    </source>
</evidence>
<evidence type="ECO:0000269" key="9">
    <source>
    </source>
</evidence>
<evidence type="ECO:0000303" key="10">
    <source>
    </source>
</evidence>
<evidence type="ECO:0000305" key="11"/>
<evidence type="ECO:0007744" key="12">
    <source>
    </source>
</evidence>
<gene>
    <name type="primary">Mta1</name>
    <name type="synonym">Zg29</name>
</gene>
<accession>Q62599</accession>
<accession>Q9Z0N8</accession>
<organism>
    <name type="scientific">Rattus norvegicus</name>
    <name type="common">Rat</name>
    <dbReference type="NCBI Taxonomy" id="10116"/>
    <lineage>
        <taxon>Eukaryota</taxon>
        <taxon>Metazoa</taxon>
        <taxon>Chordata</taxon>
        <taxon>Craniata</taxon>
        <taxon>Vertebrata</taxon>
        <taxon>Euteleostomi</taxon>
        <taxon>Mammalia</taxon>
        <taxon>Eutheria</taxon>
        <taxon>Euarchontoglires</taxon>
        <taxon>Glires</taxon>
        <taxon>Rodentia</taxon>
        <taxon>Myomorpha</taxon>
        <taxon>Muroidea</taxon>
        <taxon>Muridae</taxon>
        <taxon>Murinae</taxon>
        <taxon>Rattus</taxon>
    </lineage>
</organism>
<proteinExistence type="evidence at protein level"/>
<sequence length="703" mass="79412">MAANMYRVGDYVYFENSSSNPYLIRRIEELNKTANGNVEAKVVCFYRRRDISSSLIALADKHATLSVCYRAGPGADTGEEGEVEEEVENPEMVDLPEKLKHQLRHRELFLSRQLESLPATHIRGKCSVTLLNETESLKSYLEREDFFFYSLVYDPQQKTLLADKGEIRVGNRYQADITDLLKDGEEDGRDQSKLETKVWEAHNPLVDKQIDQFLVVARSVGTFARALDCSSSVRQPSLHMSAAAASRDITLFHAMDTLHKNIYDISKAISALVPQGGPVLCRDEMEEWSASEANLFEEALEKYGKDFTDIQQDFLPWKSLTSIIEYYYMWKTTDRYVQQKRLKAAEAESKLKQVYIPNYNKPNPNQISVNSVKASVVNGTGTPGQSPGAGRACESCYTTQSYQWYSWGPPNMQCRLCASCWTYWKKYGGLKMPTRLDGERPGPNRNNMSPHGIPARSSGSPKFAMKTRQAFYLHTTKLTRIARRLCREILRPWHAARHPYMPINSAAIKAECTARLPEASQSPLVLKQVVRKPLEAVLRYLETHPRPPKPDPVKSSSSVLSSLTPAKSAPVINNGSPTILGKRSYEQHNGVDGLANHGQTRHMGPSRNLLLNGKSYPTKVRLIRGGSLPPVKRRRMNWIDAPDDVFYMATEETRKIRKLLSSSETKRAARRPYKPIALRQSQALPLRPPPPAPVNDEPIVIED</sequence>
<feature type="chain" id="PRO_0000083495" description="Metastasis-associated protein MTA1">
    <location>
        <begin position="1"/>
        <end position="703"/>
    </location>
</feature>
<feature type="domain" description="BAH" evidence="5">
    <location>
        <begin position="1"/>
        <end position="164"/>
    </location>
</feature>
<feature type="domain" description="ELM2" evidence="6">
    <location>
        <begin position="165"/>
        <end position="276"/>
    </location>
</feature>
<feature type="domain" description="SANT" evidence="7">
    <location>
        <begin position="283"/>
        <end position="335"/>
    </location>
</feature>
<feature type="zinc finger region" description="GATA-type; atypical">
    <location>
        <begin position="393"/>
        <end position="420"/>
    </location>
</feature>
<feature type="region of interest" description="Disordered" evidence="8">
    <location>
        <begin position="437"/>
        <end position="460"/>
    </location>
</feature>
<feature type="region of interest" description="Disordered" evidence="8">
    <location>
        <begin position="542"/>
        <end position="583"/>
    </location>
</feature>
<feature type="region of interest" description="Interaction with RBBP4" evidence="2">
    <location>
        <begin position="644"/>
        <end position="674"/>
    </location>
</feature>
<feature type="region of interest" description="Disordered" evidence="8">
    <location>
        <begin position="661"/>
        <end position="703"/>
    </location>
</feature>
<feature type="short sequence motif" description="SH3-binding" evidence="4">
    <location>
        <begin position="545"/>
        <end position="552"/>
    </location>
</feature>
<feature type="short sequence motif" description="SH3-binding" evidence="4">
    <location>
        <begin position="684"/>
        <end position="693"/>
    </location>
</feature>
<feature type="short sequence motif" description="SUMO interaction motif 1 (SIM); crucial for efficient sumoylation" evidence="1">
    <location>
        <begin position="699"/>
        <end position="703"/>
    </location>
</feature>
<feature type="compositionally biased region" description="Basic and acidic residues" evidence="8">
    <location>
        <begin position="542"/>
        <end position="552"/>
    </location>
</feature>
<feature type="compositionally biased region" description="Low complexity" evidence="8">
    <location>
        <begin position="553"/>
        <end position="565"/>
    </location>
</feature>
<feature type="modified residue" description="Phosphoserine" evidence="2">
    <location>
        <position position="386"/>
    </location>
</feature>
<feature type="modified residue" description="Phosphoserine" evidence="2">
    <location>
        <position position="449"/>
    </location>
</feature>
<feature type="modified residue" description="Phosphoserine" evidence="12">
    <location>
        <position position="522"/>
    </location>
</feature>
<feature type="modified residue" description="Phosphothreonine" evidence="2">
    <location>
        <position position="564"/>
    </location>
</feature>
<feature type="modified residue" description="Phosphoserine" evidence="12">
    <location>
        <position position="576"/>
    </location>
</feature>
<feature type="modified residue" description="Phosphothreonine" evidence="2">
    <location>
        <position position="578"/>
    </location>
</feature>
<feature type="modified residue" description="N6-acetyllysine; alternate" evidence="2">
    <location>
        <position position="614"/>
    </location>
</feature>
<feature type="modified residue" description="Phosphoserine" evidence="2">
    <location>
        <position position="627"/>
    </location>
</feature>
<feature type="cross-link" description="Glycyl lysine isopeptide (Lys-Gly) (interchain with G-Cter in ubiquitin)" evidence="2">
    <location>
        <position position="182"/>
    </location>
</feature>
<feature type="cross-link" description="Glycyl lysine isopeptide (Lys-Gly) (interchain with G-Cter in SUMO2 and SUMO3)" evidence="1">
    <location>
        <position position="509"/>
    </location>
</feature>
<feature type="cross-link" description="Glycyl lysine isopeptide (Lys-Gly) (interchain with G-Cter in SUMO2)" evidence="2">
    <location>
        <position position="549"/>
    </location>
</feature>
<feature type="cross-link" description="Glycyl lysine isopeptide (Lys-Gly) (interchain with G-Cter in ubiquitin); alternate" evidence="2">
    <location>
        <position position="614"/>
    </location>
</feature>
<feature type="splice variant" id="VSP_019712" description="In isoform 2." evidence="10">
    <location>
        <begin position="1"/>
        <end position="464"/>
    </location>
</feature>
<feature type="splice variant" id="VSP_019713" description="In isoform 2." evidence="10">
    <original>G</original>
    <variation>GNMKKRLLMPSRG</variation>
    <location>
        <position position="593"/>
    </location>
</feature>